<gene>
    <name evidence="1" type="primary">glyQ</name>
    <name type="ordered locus">BCAN_A0407</name>
</gene>
<reference key="1">
    <citation type="submission" date="2007-10" db="EMBL/GenBank/DDBJ databases">
        <title>Brucella canis ATCC 23365 whole genome shotgun sequencing project.</title>
        <authorList>
            <person name="Setubal J.C."/>
            <person name="Bowns C."/>
            <person name="Boyle S."/>
            <person name="Crasta O.R."/>
            <person name="Czar M.J."/>
            <person name="Dharmanolla C."/>
            <person name="Gillespie J.J."/>
            <person name="Kenyon R.W."/>
            <person name="Lu J."/>
            <person name="Mane S."/>
            <person name="Mohapatra S."/>
            <person name="Nagrani S."/>
            <person name="Purkayastha A."/>
            <person name="Rajasimha H.K."/>
            <person name="Shallom J.M."/>
            <person name="Shallom S."/>
            <person name="Shukla M."/>
            <person name="Snyder E.E."/>
            <person name="Sobral B.W."/>
            <person name="Wattam A.R."/>
            <person name="Will R."/>
            <person name="Williams K."/>
            <person name="Yoo H."/>
            <person name="Bruce D."/>
            <person name="Detter C."/>
            <person name="Munk C."/>
            <person name="Brettin T.S."/>
        </authorList>
    </citation>
    <scope>NUCLEOTIDE SEQUENCE [LARGE SCALE GENOMIC DNA]</scope>
    <source>
        <strain>ATCC 23365 / NCTC 10854 / RM-666</strain>
    </source>
</reference>
<protein>
    <recommendedName>
        <fullName evidence="1">Glycine--tRNA ligase alpha subunit</fullName>
        <ecNumber evidence="1">6.1.1.14</ecNumber>
    </recommendedName>
    <alternativeName>
        <fullName evidence="1">Glycyl-tRNA synthetase alpha subunit</fullName>
        <shortName evidence="1">GlyRS</shortName>
    </alternativeName>
</protein>
<name>SYGA_BRUC2</name>
<organism>
    <name type="scientific">Brucella canis (strain ATCC 23365 / NCTC 10854 / RM-666)</name>
    <dbReference type="NCBI Taxonomy" id="483179"/>
    <lineage>
        <taxon>Bacteria</taxon>
        <taxon>Pseudomonadati</taxon>
        <taxon>Pseudomonadota</taxon>
        <taxon>Alphaproteobacteria</taxon>
        <taxon>Hyphomicrobiales</taxon>
        <taxon>Brucellaceae</taxon>
        <taxon>Brucella/Ochrobactrum group</taxon>
        <taxon>Brucella</taxon>
    </lineage>
</organism>
<proteinExistence type="inferred from homology"/>
<comment type="catalytic activity">
    <reaction evidence="1">
        <text>tRNA(Gly) + glycine + ATP = glycyl-tRNA(Gly) + AMP + diphosphate</text>
        <dbReference type="Rhea" id="RHEA:16013"/>
        <dbReference type="Rhea" id="RHEA-COMP:9664"/>
        <dbReference type="Rhea" id="RHEA-COMP:9683"/>
        <dbReference type="ChEBI" id="CHEBI:30616"/>
        <dbReference type="ChEBI" id="CHEBI:33019"/>
        <dbReference type="ChEBI" id="CHEBI:57305"/>
        <dbReference type="ChEBI" id="CHEBI:78442"/>
        <dbReference type="ChEBI" id="CHEBI:78522"/>
        <dbReference type="ChEBI" id="CHEBI:456215"/>
        <dbReference type="EC" id="6.1.1.14"/>
    </reaction>
</comment>
<comment type="subunit">
    <text evidence="1">Tetramer of two alpha and two beta subunits.</text>
</comment>
<comment type="subcellular location">
    <subcellularLocation>
        <location evidence="1">Cytoplasm</location>
    </subcellularLocation>
</comment>
<comment type="similarity">
    <text evidence="1">Belongs to the class-II aminoacyl-tRNA synthetase family.</text>
</comment>
<keyword id="KW-0030">Aminoacyl-tRNA synthetase</keyword>
<keyword id="KW-0067">ATP-binding</keyword>
<keyword id="KW-0963">Cytoplasm</keyword>
<keyword id="KW-0436">Ligase</keyword>
<keyword id="KW-0547">Nucleotide-binding</keyword>
<keyword id="KW-0648">Protein biosynthesis</keyword>
<keyword id="KW-1185">Reference proteome</keyword>
<sequence length="308" mass="34975">MHPTRSFQGLILTLHNYWAEHGCAILQPYDMEVGAGTFHPATTLRSLGPKPWKAAYVQPSRRPKDGRYGENPNRLQHYYQYQVLIKPSPPNLQDLYLGSLKAIGLDPTLHDVRFVEDDWESPTLGAWGLGWECWCDGMEVSQFTYFQQVCGIECSPVAGELTYGLERLAMYVQGVDNVYDLNFNGLEGDEKVTYGDVFLQAEQEYSRYNFEMANTETLHQHFIDAERECEAILKAGSTGENSLHKCVFPAYDQCIKASHVFNLMDARGVISVTERQSYILRVRNLARQCGEAFLLTDAGGFNFKREGE</sequence>
<dbReference type="EC" id="6.1.1.14" evidence="1"/>
<dbReference type="EMBL" id="CP000872">
    <property type="protein sequence ID" value="ABX61493.1"/>
    <property type="molecule type" value="Genomic_DNA"/>
</dbReference>
<dbReference type="RefSeq" id="WP_004688025.1">
    <property type="nucleotide sequence ID" value="NC_010103.1"/>
</dbReference>
<dbReference type="SMR" id="A9M8H7"/>
<dbReference type="KEGG" id="bcs:BCAN_A0407"/>
<dbReference type="HOGENOM" id="CLU_057066_1_0_5"/>
<dbReference type="PhylomeDB" id="A9M8H7"/>
<dbReference type="Proteomes" id="UP000001385">
    <property type="component" value="Chromosome I"/>
</dbReference>
<dbReference type="GO" id="GO:0005829">
    <property type="term" value="C:cytosol"/>
    <property type="evidence" value="ECO:0007669"/>
    <property type="project" value="TreeGrafter"/>
</dbReference>
<dbReference type="GO" id="GO:0005524">
    <property type="term" value="F:ATP binding"/>
    <property type="evidence" value="ECO:0007669"/>
    <property type="project" value="UniProtKB-UniRule"/>
</dbReference>
<dbReference type="GO" id="GO:0004820">
    <property type="term" value="F:glycine-tRNA ligase activity"/>
    <property type="evidence" value="ECO:0007669"/>
    <property type="project" value="UniProtKB-UniRule"/>
</dbReference>
<dbReference type="GO" id="GO:0006426">
    <property type="term" value="P:glycyl-tRNA aminoacylation"/>
    <property type="evidence" value="ECO:0007669"/>
    <property type="project" value="UniProtKB-UniRule"/>
</dbReference>
<dbReference type="CDD" id="cd00733">
    <property type="entry name" value="GlyRS_alpha_core"/>
    <property type="match status" value="1"/>
</dbReference>
<dbReference type="FunFam" id="3.30.930.10:FF:000006">
    <property type="entry name" value="Glycine--tRNA ligase alpha subunit"/>
    <property type="match status" value="1"/>
</dbReference>
<dbReference type="Gene3D" id="3.30.930.10">
    <property type="entry name" value="Bira Bifunctional Protein, Domain 2"/>
    <property type="match status" value="1"/>
</dbReference>
<dbReference type="Gene3D" id="1.20.58.180">
    <property type="entry name" value="Class II aaRS and biotin synthetases, domain 2"/>
    <property type="match status" value="1"/>
</dbReference>
<dbReference type="HAMAP" id="MF_00254">
    <property type="entry name" value="Gly_tRNA_synth_alpha"/>
    <property type="match status" value="1"/>
</dbReference>
<dbReference type="InterPro" id="IPR045864">
    <property type="entry name" value="aa-tRNA-synth_II/BPL/LPL"/>
</dbReference>
<dbReference type="InterPro" id="IPR006194">
    <property type="entry name" value="Gly-tRNA-synth_heterodimer"/>
</dbReference>
<dbReference type="InterPro" id="IPR002310">
    <property type="entry name" value="Gly-tRNA_ligase_asu"/>
</dbReference>
<dbReference type="NCBIfam" id="TIGR00388">
    <property type="entry name" value="glyQ"/>
    <property type="match status" value="1"/>
</dbReference>
<dbReference type="NCBIfam" id="NF006827">
    <property type="entry name" value="PRK09348.1"/>
    <property type="match status" value="1"/>
</dbReference>
<dbReference type="PANTHER" id="PTHR30075:SF2">
    <property type="entry name" value="GLYCINE--TRNA LIGASE, CHLOROPLASTIC_MITOCHONDRIAL 2"/>
    <property type="match status" value="1"/>
</dbReference>
<dbReference type="PANTHER" id="PTHR30075">
    <property type="entry name" value="GLYCYL-TRNA SYNTHETASE"/>
    <property type="match status" value="1"/>
</dbReference>
<dbReference type="Pfam" id="PF02091">
    <property type="entry name" value="tRNA-synt_2e"/>
    <property type="match status" value="1"/>
</dbReference>
<dbReference type="PRINTS" id="PR01044">
    <property type="entry name" value="TRNASYNTHGA"/>
</dbReference>
<dbReference type="SUPFAM" id="SSF55681">
    <property type="entry name" value="Class II aaRS and biotin synthetases"/>
    <property type="match status" value="1"/>
</dbReference>
<dbReference type="PROSITE" id="PS50861">
    <property type="entry name" value="AA_TRNA_LIGASE_II_GLYAB"/>
    <property type="match status" value="1"/>
</dbReference>
<feature type="chain" id="PRO_1000078522" description="Glycine--tRNA ligase alpha subunit">
    <location>
        <begin position="1"/>
        <end position="308"/>
    </location>
</feature>
<accession>A9M8H7</accession>
<evidence type="ECO:0000255" key="1">
    <source>
        <dbReference type="HAMAP-Rule" id="MF_00254"/>
    </source>
</evidence>